<sequence>MNVGILGIGRYVPEKVVTNHDLEKIMETSDEWIRTRTGIAERRIADDTIDTSYMAVEASKKALEDAGISGEDIDLILVATVTPDRAFPAVACVIQEAIGAKHAAAMDLSAACAGFMYGMITAQQFIQTGTYKNVLVVGSDKLSKIVDWNDRNTAVLFGDGAGAVVMGAVSEGKGVLSFELGADGSGGKHLYQDEYVMMNGREVFKFAVRQLGDSCLRVLDKAGLTKEDVDFLVPHQANIRIMESARERLNLPQEKMSMTIEKFGNTSASSIPIAMVEELQNGRIQDGDLIILVGFGGGLTWGAVALRWGK</sequence>
<evidence type="ECO:0000255" key="1">
    <source>
        <dbReference type="HAMAP-Rule" id="MF_01815"/>
    </source>
</evidence>
<keyword id="KW-0012">Acyltransferase</keyword>
<keyword id="KW-0963">Cytoplasm</keyword>
<keyword id="KW-0275">Fatty acid biosynthesis</keyword>
<keyword id="KW-0276">Fatty acid metabolism</keyword>
<keyword id="KW-0444">Lipid biosynthesis</keyword>
<keyword id="KW-0443">Lipid metabolism</keyword>
<keyword id="KW-0511">Multifunctional enzyme</keyword>
<keyword id="KW-1185">Reference proteome</keyword>
<keyword id="KW-0808">Transferase</keyword>
<proteinExistence type="inferred from homology"/>
<reference key="1">
    <citation type="journal article" date="2003" name="Nature">
        <title>Genome sequence of Bacillus cereus and comparative analysis with Bacillus anthracis.</title>
        <authorList>
            <person name="Ivanova N."/>
            <person name="Sorokin A."/>
            <person name="Anderson I."/>
            <person name="Galleron N."/>
            <person name="Candelon B."/>
            <person name="Kapatral V."/>
            <person name="Bhattacharyya A."/>
            <person name="Reznik G."/>
            <person name="Mikhailova N."/>
            <person name="Lapidus A."/>
            <person name="Chu L."/>
            <person name="Mazur M."/>
            <person name="Goltsman E."/>
            <person name="Larsen N."/>
            <person name="D'Souza M."/>
            <person name="Walunas T."/>
            <person name="Grechkin Y."/>
            <person name="Pusch G."/>
            <person name="Haselkorn R."/>
            <person name="Fonstein M."/>
            <person name="Ehrlich S.D."/>
            <person name="Overbeek R."/>
            <person name="Kyrpides N.C."/>
        </authorList>
    </citation>
    <scope>NUCLEOTIDE SEQUENCE [LARGE SCALE GENOMIC DNA]</scope>
    <source>
        <strain>ATCC 14579 / DSM 31 / CCUG 7414 / JCM 2152 / NBRC 15305 / NCIMB 9373 / NCTC 2599 / NRRL B-3711</strain>
    </source>
</reference>
<name>FABH1_BACCR</name>
<gene>
    <name evidence="1" type="primary">fabH1</name>
    <name type="ordered locus">BC_1173</name>
</gene>
<dbReference type="EC" id="2.3.1.180" evidence="1"/>
<dbReference type="EMBL" id="AE016877">
    <property type="protein sequence ID" value="AAP08160.1"/>
    <property type="molecule type" value="Genomic_DNA"/>
</dbReference>
<dbReference type="RefSeq" id="NP_830959.1">
    <property type="nucleotide sequence ID" value="NC_004722.1"/>
</dbReference>
<dbReference type="SMR" id="Q81GM0"/>
<dbReference type="STRING" id="226900.BC_1173"/>
<dbReference type="MetOSite" id="Q81GM0"/>
<dbReference type="KEGG" id="bce:BC1173"/>
<dbReference type="PATRIC" id="fig|226900.8.peg.1139"/>
<dbReference type="HOGENOM" id="CLU_039592_3_1_9"/>
<dbReference type="OrthoDB" id="9815506at2"/>
<dbReference type="UniPathway" id="UPA00094"/>
<dbReference type="Proteomes" id="UP000001417">
    <property type="component" value="Chromosome"/>
</dbReference>
<dbReference type="GO" id="GO:0005737">
    <property type="term" value="C:cytoplasm"/>
    <property type="evidence" value="ECO:0007669"/>
    <property type="project" value="UniProtKB-SubCell"/>
</dbReference>
<dbReference type="GO" id="GO:0004315">
    <property type="term" value="F:3-oxoacyl-[acyl-carrier-protein] synthase activity"/>
    <property type="evidence" value="ECO:0007669"/>
    <property type="project" value="InterPro"/>
</dbReference>
<dbReference type="GO" id="GO:0033818">
    <property type="term" value="F:beta-ketoacyl-acyl-carrier-protein synthase III activity"/>
    <property type="evidence" value="ECO:0007669"/>
    <property type="project" value="UniProtKB-UniRule"/>
</dbReference>
<dbReference type="GO" id="GO:0006633">
    <property type="term" value="P:fatty acid biosynthetic process"/>
    <property type="evidence" value="ECO:0007669"/>
    <property type="project" value="UniProtKB-UniRule"/>
</dbReference>
<dbReference type="CDD" id="cd00830">
    <property type="entry name" value="KAS_III"/>
    <property type="match status" value="1"/>
</dbReference>
<dbReference type="FunFam" id="3.40.47.10:FF:000004">
    <property type="entry name" value="3-oxoacyl-[acyl-carrier-protein] synthase 3"/>
    <property type="match status" value="1"/>
</dbReference>
<dbReference type="Gene3D" id="3.40.47.10">
    <property type="match status" value="1"/>
</dbReference>
<dbReference type="HAMAP" id="MF_01815">
    <property type="entry name" value="FabH"/>
    <property type="match status" value="1"/>
</dbReference>
<dbReference type="InterPro" id="IPR013747">
    <property type="entry name" value="ACP_syn_III_C"/>
</dbReference>
<dbReference type="InterPro" id="IPR013751">
    <property type="entry name" value="ACP_syn_III_N"/>
</dbReference>
<dbReference type="InterPro" id="IPR004655">
    <property type="entry name" value="FabH"/>
</dbReference>
<dbReference type="InterPro" id="IPR016039">
    <property type="entry name" value="Thiolase-like"/>
</dbReference>
<dbReference type="NCBIfam" id="TIGR00747">
    <property type="entry name" value="fabH"/>
    <property type="match status" value="1"/>
</dbReference>
<dbReference type="NCBIfam" id="NF006829">
    <property type="entry name" value="PRK09352.1"/>
    <property type="match status" value="1"/>
</dbReference>
<dbReference type="PANTHER" id="PTHR43091">
    <property type="entry name" value="3-OXOACYL-[ACYL-CARRIER-PROTEIN] SYNTHASE"/>
    <property type="match status" value="1"/>
</dbReference>
<dbReference type="PANTHER" id="PTHR43091:SF1">
    <property type="entry name" value="BETA-KETOACYL-[ACYL-CARRIER-PROTEIN] SYNTHASE III, CHLOROPLASTIC"/>
    <property type="match status" value="1"/>
</dbReference>
<dbReference type="Pfam" id="PF08545">
    <property type="entry name" value="ACP_syn_III"/>
    <property type="match status" value="1"/>
</dbReference>
<dbReference type="Pfam" id="PF08541">
    <property type="entry name" value="ACP_syn_III_C"/>
    <property type="match status" value="1"/>
</dbReference>
<dbReference type="SUPFAM" id="SSF53901">
    <property type="entry name" value="Thiolase-like"/>
    <property type="match status" value="1"/>
</dbReference>
<accession>Q81GM0</accession>
<protein>
    <recommendedName>
        <fullName evidence="1">Beta-ketoacyl-[acyl-carrier-protein] synthase III 1</fullName>
        <shortName evidence="1">Beta-ketoacyl-ACP synthase III 1</shortName>
        <shortName evidence="1">KAS III 1</shortName>
        <ecNumber evidence="1">2.3.1.180</ecNumber>
    </recommendedName>
    <alternativeName>
        <fullName evidence="1">3-oxoacyl-[acyl-carrier-protein] synthase 3 1</fullName>
    </alternativeName>
    <alternativeName>
        <fullName evidence="1">3-oxoacyl-[acyl-carrier-protein] synthase III 1</fullName>
    </alternativeName>
</protein>
<comment type="function">
    <text evidence="1">Catalyzes the condensation reaction of fatty acid synthesis by the addition to an acyl acceptor of two carbons from malonyl-ACP. Catalyzes the first condensation reaction which initiates fatty acid synthesis and may therefore play a role in governing the total rate of fatty acid production. Possesses both acetoacetyl-ACP synthase and acetyl transacylase activities. Its substrate specificity determines the biosynthesis of branched-chain and/or straight-chain of fatty acids.</text>
</comment>
<comment type="catalytic activity">
    <reaction evidence="1">
        <text>malonyl-[ACP] + acetyl-CoA + H(+) = 3-oxobutanoyl-[ACP] + CO2 + CoA</text>
        <dbReference type="Rhea" id="RHEA:12080"/>
        <dbReference type="Rhea" id="RHEA-COMP:9623"/>
        <dbReference type="Rhea" id="RHEA-COMP:9625"/>
        <dbReference type="ChEBI" id="CHEBI:15378"/>
        <dbReference type="ChEBI" id="CHEBI:16526"/>
        <dbReference type="ChEBI" id="CHEBI:57287"/>
        <dbReference type="ChEBI" id="CHEBI:57288"/>
        <dbReference type="ChEBI" id="CHEBI:78449"/>
        <dbReference type="ChEBI" id="CHEBI:78450"/>
        <dbReference type="EC" id="2.3.1.180"/>
    </reaction>
</comment>
<comment type="pathway">
    <text evidence="1">Lipid metabolism; fatty acid biosynthesis.</text>
</comment>
<comment type="subunit">
    <text evidence="1">Homodimer.</text>
</comment>
<comment type="subcellular location">
    <subcellularLocation>
        <location evidence="1">Cytoplasm</location>
    </subcellularLocation>
</comment>
<comment type="domain">
    <text evidence="1">The last Arg residue of the ACP-binding site is essential for the weak association between ACP/AcpP and FabH.</text>
</comment>
<comment type="similarity">
    <text evidence="1">Belongs to the thiolase-like superfamily. FabH family.</text>
</comment>
<organism>
    <name type="scientific">Bacillus cereus (strain ATCC 14579 / DSM 31 / CCUG 7414 / JCM 2152 / NBRC 15305 / NCIMB 9373 / NCTC 2599 / NRRL B-3711)</name>
    <dbReference type="NCBI Taxonomy" id="226900"/>
    <lineage>
        <taxon>Bacteria</taxon>
        <taxon>Bacillati</taxon>
        <taxon>Bacillota</taxon>
        <taxon>Bacilli</taxon>
        <taxon>Bacillales</taxon>
        <taxon>Bacillaceae</taxon>
        <taxon>Bacillus</taxon>
        <taxon>Bacillus cereus group</taxon>
    </lineage>
</organism>
<feature type="chain" id="PRO_0000110395" description="Beta-ketoacyl-[acyl-carrier-protein] synthase III 1">
    <location>
        <begin position="1"/>
        <end position="310"/>
    </location>
</feature>
<feature type="region of interest" description="ACP-binding" evidence="1">
    <location>
        <begin position="236"/>
        <end position="240"/>
    </location>
</feature>
<feature type="active site" evidence="1">
    <location>
        <position position="112"/>
    </location>
</feature>
<feature type="active site" evidence="1">
    <location>
        <position position="235"/>
    </location>
</feature>
<feature type="active site" evidence="1">
    <location>
        <position position="265"/>
    </location>
</feature>